<dbReference type="EC" id="2.3.1.180" evidence="1"/>
<dbReference type="EMBL" id="AE015924">
    <property type="protein sequence ID" value="AAQ67094.1"/>
    <property type="molecule type" value="Genomic_DNA"/>
</dbReference>
<dbReference type="RefSeq" id="WP_005873472.1">
    <property type="nucleotide sequence ID" value="NC_002950.2"/>
</dbReference>
<dbReference type="SMR" id="Q7MAV3"/>
<dbReference type="STRING" id="242619.PG_2141"/>
<dbReference type="EnsemblBacteria" id="AAQ67094">
    <property type="protein sequence ID" value="AAQ67094"/>
    <property type="gene ID" value="PG_2141"/>
</dbReference>
<dbReference type="KEGG" id="pgi:PG_2141"/>
<dbReference type="eggNOG" id="COG0332">
    <property type="taxonomic scope" value="Bacteria"/>
</dbReference>
<dbReference type="HOGENOM" id="CLU_039592_3_1_10"/>
<dbReference type="UniPathway" id="UPA00094"/>
<dbReference type="Proteomes" id="UP000000588">
    <property type="component" value="Chromosome"/>
</dbReference>
<dbReference type="GO" id="GO:0005737">
    <property type="term" value="C:cytoplasm"/>
    <property type="evidence" value="ECO:0007669"/>
    <property type="project" value="UniProtKB-SubCell"/>
</dbReference>
<dbReference type="GO" id="GO:0004315">
    <property type="term" value="F:3-oxoacyl-[acyl-carrier-protein] synthase activity"/>
    <property type="evidence" value="ECO:0007669"/>
    <property type="project" value="InterPro"/>
</dbReference>
<dbReference type="GO" id="GO:0033818">
    <property type="term" value="F:beta-ketoacyl-acyl-carrier-protein synthase III activity"/>
    <property type="evidence" value="ECO:0007669"/>
    <property type="project" value="UniProtKB-UniRule"/>
</dbReference>
<dbReference type="GO" id="GO:0006633">
    <property type="term" value="P:fatty acid biosynthetic process"/>
    <property type="evidence" value="ECO:0007669"/>
    <property type="project" value="UniProtKB-UniRule"/>
</dbReference>
<dbReference type="GO" id="GO:0044550">
    <property type="term" value="P:secondary metabolite biosynthetic process"/>
    <property type="evidence" value="ECO:0007669"/>
    <property type="project" value="TreeGrafter"/>
</dbReference>
<dbReference type="CDD" id="cd00830">
    <property type="entry name" value="KAS_III"/>
    <property type="match status" value="1"/>
</dbReference>
<dbReference type="FunFam" id="3.40.47.10:FF:000004">
    <property type="entry name" value="3-oxoacyl-[acyl-carrier-protein] synthase 3"/>
    <property type="match status" value="1"/>
</dbReference>
<dbReference type="Gene3D" id="3.40.47.10">
    <property type="match status" value="1"/>
</dbReference>
<dbReference type="HAMAP" id="MF_01815">
    <property type="entry name" value="FabH"/>
    <property type="match status" value="1"/>
</dbReference>
<dbReference type="InterPro" id="IPR013747">
    <property type="entry name" value="ACP_syn_III_C"/>
</dbReference>
<dbReference type="InterPro" id="IPR013751">
    <property type="entry name" value="ACP_syn_III_N"/>
</dbReference>
<dbReference type="InterPro" id="IPR004655">
    <property type="entry name" value="FabH"/>
</dbReference>
<dbReference type="InterPro" id="IPR016039">
    <property type="entry name" value="Thiolase-like"/>
</dbReference>
<dbReference type="NCBIfam" id="TIGR00747">
    <property type="entry name" value="fabH"/>
    <property type="match status" value="1"/>
</dbReference>
<dbReference type="NCBIfam" id="NF006829">
    <property type="entry name" value="PRK09352.1"/>
    <property type="match status" value="1"/>
</dbReference>
<dbReference type="PANTHER" id="PTHR34069">
    <property type="entry name" value="3-OXOACYL-[ACYL-CARRIER-PROTEIN] SYNTHASE 3"/>
    <property type="match status" value="1"/>
</dbReference>
<dbReference type="PANTHER" id="PTHR34069:SF2">
    <property type="entry name" value="BETA-KETOACYL-[ACYL-CARRIER-PROTEIN] SYNTHASE III"/>
    <property type="match status" value="1"/>
</dbReference>
<dbReference type="Pfam" id="PF08545">
    <property type="entry name" value="ACP_syn_III"/>
    <property type="match status" value="1"/>
</dbReference>
<dbReference type="Pfam" id="PF08541">
    <property type="entry name" value="ACP_syn_III_C"/>
    <property type="match status" value="1"/>
</dbReference>
<dbReference type="SUPFAM" id="SSF53901">
    <property type="entry name" value="Thiolase-like"/>
    <property type="match status" value="1"/>
</dbReference>
<feature type="chain" id="PRO_0000110451" description="Beta-ketoacyl-[acyl-carrier-protein] synthase III">
    <location>
        <begin position="1"/>
        <end position="335"/>
    </location>
</feature>
<feature type="region of interest" description="ACP-binding" evidence="1">
    <location>
        <begin position="257"/>
        <end position="261"/>
    </location>
</feature>
<feature type="active site" evidence="1">
    <location>
        <position position="116"/>
    </location>
</feature>
<feature type="active site" evidence="1">
    <location>
        <position position="256"/>
    </location>
</feature>
<feature type="active site" evidence="1">
    <location>
        <position position="286"/>
    </location>
</feature>
<accession>Q7MAV3</accession>
<gene>
    <name evidence="1" type="primary">fabH</name>
    <name type="ordered locus">PG_2141</name>
</gene>
<reference key="1">
    <citation type="journal article" date="2003" name="J. Bacteriol.">
        <title>Complete genome sequence of the oral pathogenic bacterium Porphyromonas gingivalis strain W83.</title>
        <authorList>
            <person name="Nelson K.E."/>
            <person name="Fleischmann R.D."/>
            <person name="DeBoy R.T."/>
            <person name="Paulsen I.T."/>
            <person name="Fouts D.E."/>
            <person name="Eisen J.A."/>
            <person name="Daugherty S.C."/>
            <person name="Dodson R.J."/>
            <person name="Durkin A.S."/>
            <person name="Gwinn M.L."/>
            <person name="Haft D.H."/>
            <person name="Kolonay J.F."/>
            <person name="Nelson W.C."/>
            <person name="Mason T.M."/>
            <person name="Tallon L."/>
            <person name="Gray J."/>
            <person name="Granger D."/>
            <person name="Tettelin H."/>
            <person name="Dong H."/>
            <person name="Galvin J.L."/>
            <person name="Duncan M.J."/>
            <person name="Dewhirst F.E."/>
            <person name="Fraser C.M."/>
        </authorList>
    </citation>
    <scope>NUCLEOTIDE SEQUENCE [LARGE SCALE GENOMIC DNA]</scope>
    <source>
        <strain>ATCC BAA-308 / W83</strain>
    </source>
</reference>
<evidence type="ECO:0000255" key="1">
    <source>
        <dbReference type="HAMAP-Rule" id="MF_01815"/>
    </source>
</evidence>
<keyword id="KW-0012">Acyltransferase</keyword>
<keyword id="KW-0963">Cytoplasm</keyword>
<keyword id="KW-0275">Fatty acid biosynthesis</keyword>
<keyword id="KW-0276">Fatty acid metabolism</keyword>
<keyword id="KW-0444">Lipid biosynthesis</keyword>
<keyword id="KW-0443">Lipid metabolism</keyword>
<keyword id="KW-0511">Multifunctional enzyme</keyword>
<keyword id="KW-1185">Reference proteome</keyword>
<keyword id="KW-0808">Transferase</keyword>
<proteinExistence type="inferred from homology"/>
<protein>
    <recommendedName>
        <fullName evidence="1">Beta-ketoacyl-[acyl-carrier-protein] synthase III</fullName>
        <shortName evidence="1">Beta-ketoacyl-ACP synthase III</shortName>
        <shortName evidence="1">KAS III</shortName>
        <ecNumber evidence="1">2.3.1.180</ecNumber>
    </recommendedName>
    <alternativeName>
        <fullName evidence="1">3-oxoacyl-[acyl-carrier-protein] synthase 3</fullName>
    </alternativeName>
    <alternativeName>
        <fullName evidence="1">3-oxoacyl-[acyl-carrier-protein] synthase III</fullName>
    </alternativeName>
</protein>
<organism>
    <name type="scientific">Porphyromonas gingivalis (strain ATCC BAA-308 / W83)</name>
    <dbReference type="NCBI Taxonomy" id="242619"/>
    <lineage>
        <taxon>Bacteria</taxon>
        <taxon>Pseudomonadati</taxon>
        <taxon>Bacteroidota</taxon>
        <taxon>Bacteroidia</taxon>
        <taxon>Bacteroidales</taxon>
        <taxon>Porphyromonadaceae</taxon>
        <taxon>Porphyromonas</taxon>
    </lineage>
</organism>
<sequence>MNKINAAITAVGAYLPEDVITNDDLEKMVDTNDEWIMTRVGIKERRILRDKNKGASYLAIRAAQDLFERHGIDPKSIDGLILATNSSDYHFPSTASIVAHEIGCGDIFSFDMQAACPTFIYALEVGANFIRSGRYSKILVIATEKMTAFTDYTDRATCPLFGDGAGCVLLEATEEEVGVMDAVLHSNGIGKDHLIMKAGGSACPATHETVDNRWHYVYQEGQVVFKHAVVDMCNSCVEIMERNNLSHDDITWVVPHQANLRIIDAVARRMGVPYEKVMVNIERYGNTSSATIPICLWEWEHKLKKGDVLVMTSFGAGFTWGAVYVKWAYDGSTVR</sequence>
<name>FABH_PORGI</name>
<comment type="function">
    <text evidence="1">Catalyzes the condensation reaction of fatty acid synthesis by the addition to an acyl acceptor of two carbons from malonyl-ACP. Catalyzes the first condensation reaction which initiates fatty acid synthesis and may therefore play a role in governing the total rate of fatty acid production. Possesses both acetoacetyl-ACP synthase and acetyl transacylase activities. Its substrate specificity determines the biosynthesis of branched-chain and/or straight-chain of fatty acids.</text>
</comment>
<comment type="catalytic activity">
    <reaction evidence="1">
        <text>malonyl-[ACP] + acetyl-CoA + H(+) = 3-oxobutanoyl-[ACP] + CO2 + CoA</text>
        <dbReference type="Rhea" id="RHEA:12080"/>
        <dbReference type="Rhea" id="RHEA-COMP:9623"/>
        <dbReference type="Rhea" id="RHEA-COMP:9625"/>
        <dbReference type="ChEBI" id="CHEBI:15378"/>
        <dbReference type="ChEBI" id="CHEBI:16526"/>
        <dbReference type="ChEBI" id="CHEBI:57287"/>
        <dbReference type="ChEBI" id="CHEBI:57288"/>
        <dbReference type="ChEBI" id="CHEBI:78449"/>
        <dbReference type="ChEBI" id="CHEBI:78450"/>
        <dbReference type="EC" id="2.3.1.180"/>
    </reaction>
</comment>
<comment type="pathway">
    <text evidence="1">Lipid metabolism; fatty acid biosynthesis.</text>
</comment>
<comment type="subunit">
    <text evidence="1">Homodimer.</text>
</comment>
<comment type="subcellular location">
    <subcellularLocation>
        <location evidence="1">Cytoplasm</location>
    </subcellularLocation>
</comment>
<comment type="domain">
    <text evidence="1">The last Arg residue of the ACP-binding site is essential for the weak association between ACP/AcpP and FabH.</text>
</comment>
<comment type="similarity">
    <text evidence="1">Belongs to the thiolase-like superfamily. FabH family.</text>
</comment>